<reference key="1">
    <citation type="journal article" date="2004" name="Nat. Biotechnol.">
        <title>Complete sequence and comparative genome analysis of the dairy bacterium Streptococcus thermophilus.</title>
        <authorList>
            <person name="Bolotin A."/>
            <person name="Quinquis B."/>
            <person name="Renault P."/>
            <person name="Sorokin A."/>
            <person name="Ehrlich S.D."/>
            <person name="Kulakauskas S."/>
            <person name="Lapidus A."/>
            <person name="Goltsman E."/>
            <person name="Mazur M."/>
            <person name="Pusch G.D."/>
            <person name="Fonstein M."/>
            <person name="Overbeek R."/>
            <person name="Kyprides N."/>
            <person name="Purnelle B."/>
            <person name="Prozzi D."/>
            <person name="Ngui K."/>
            <person name="Masuy D."/>
            <person name="Hancy F."/>
            <person name="Burteau S."/>
            <person name="Boutry M."/>
            <person name="Delcour J."/>
            <person name="Goffeau A."/>
            <person name="Hols P."/>
        </authorList>
    </citation>
    <scope>NUCLEOTIDE SEQUENCE [LARGE SCALE GENOMIC DNA]</scope>
    <source>
        <strain>ATCC BAA-250 / LMG 18311</strain>
    </source>
</reference>
<proteinExistence type="inferred from homology"/>
<evidence type="ECO:0000255" key="1">
    <source>
        <dbReference type="HAMAP-Rule" id="MF_01539"/>
    </source>
</evidence>
<sequence length="363" mass="40577">MTVTGIIAEFNPFHNGHKYLLDHAEGIKIVAMSGNFVQRGEPAIVDKWIRAQMALENGADLVVELPFFTAVQSADYFASGAVDILSRLGIDSLTFGTEEVLDYQTIADVYSEKSEEMEAFVESLPSDLSYPQKTQKMWEKFAGVDFTGNTPNHILGLAYAKACAGKGITLNPIQRQGAGYHSLDKEVSFASATSLRLHKEDSNFVDKFMPNSKLFQTSPQVSWDNYFQLLVYQILTNPDLTSVFQVNEEIASRLKAAVREISSVEELVDKVATKRYTKARVRRILTYILVGAVDNSLPKSIHVLGFSQKGQFHLKSVKKSVDIVARIGRKPWDMLTQQADNVYQLGNPELCEQNFGRVPIRVK</sequence>
<protein>
    <recommendedName>
        <fullName evidence="1">tRNA(Met) cytidine acetate ligase</fullName>
        <ecNumber evidence="1">6.3.4.-</ecNumber>
    </recommendedName>
</protein>
<name>TMCAL_STRT2</name>
<comment type="function">
    <text evidence="1">Catalyzes the formation of N(4)-acetylcytidine (ac(4)C) at the wobble position of elongator tRNA(Met), using acetate and ATP as substrates. First activates an acetate ion to form acetyladenylate (Ac-AMP) and then transfers the acetyl group to tRNA to form ac(4)C34.</text>
</comment>
<comment type="catalytic activity">
    <reaction evidence="1">
        <text>cytidine(34) in elongator tRNA(Met) + acetate + ATP = N(4)-acetylcytidine(34) in elongator tRNA(Met) + AMP + diphosphate</text>
        <dbReference type="Rhea" id="RHEA:58144"/>
        <dbReference type="Rhea" id="RHEA-COMP:10693"/>
        <dbReference type="Rhea" id="RHEA-COMP:10694"/>
        <dbReference type="ChEBI" id="CHEBI:30089"/>
        <dbReference type="ChEBI" id="CHEBI:30616"/>
        <dbReference type="ChEBI" id="CHEBI:33019"/>
        <dbReference type="ChEBI" id="CHEBI:74900"/>
        <dbReference type="ChEBI" id="CHEBI:82748"/>
        <dbReference type="ChEBI" id="CHEBI:456215"/>
    </reaction>
</comment>
<comment type="subcellular location">
    <subcellularLocation>
        <location evidence="1">Cytoplasm</location>
    </subcellularLocation>
</comment>
<comment type="similarity">
    <text evidence="1">Belongs to the TmcAL family.</text>
</comment>
<feature type="chain" id="PRO_0000147196" description="tRNA(Met) cytidine acetate ligase">
    <location>
        <begin position="1"/>
        <end position="363"/>
    </location>
</feature>
<feature type="binding site" evidence="1">
    <location>
        <begin position="7"/>
        <end position="20"/>
    </location>
    <ligand>
        <name>ATP</name>
        <dbReference type="ChEBI" id="CHEBI:30616"/>
    </ligand>
</feature>
<feature type="binding site" evidence="1">
    <location>
        <position position="96"/>
    </location>
    <ligand>
        <name>ATP</name>
        <dbReference type="ChEBI" id="CHEBI:30616"/>
    </ligand>
</feature>
<feature type="binding site" evidence="1">
    <location>
        <position position="152"/>
    </location>
    <ligand>
        <name>ATP</name>
        <dbReference type="ChEBI" id="CHEBI:30616"/>
    </ligand>
</feature>
<feature type="binding site" evidence="1">
    <location>
        <position position="175"/>
    </location>
    <ligand>
        <name>ATP</name>
        <dbReference type="ChEBI" id="CHEBI:30616"/>
    </ligand>
</feature>
<dbReference type="EC" id="6.3.4.-" evidence="1"/>
<dbReference type="EMBL" id="CP000023">
    <property type="protein sequence ID" value="AAV61218.1"/>
    <property type="molecule type" value="Genomic_DNA"/>
</dbReference>
<dbReference type="RefSeq" id="WP_011226442.1">
    <property type="nucleotide sequence ID" value="NC_006448.1"/>
</dbReference>
<dbReference type="SMR" id="Q5M323"/>
<dbReference type="STRING" id="264199.stu1615"/>
<dbReference type="KEGG" id="stl:stu1615"/>
<dbReference type="PATRIC" id="fig|264199.4.peg.1589"/>
<dbReference type="eggNOG" id="COG1323">
    <property type="taxonomic scope" value="Bacteria"/>
</dbReference>
<dbReference type="HOGENOM" id="CLU_038915_0_2_9"/>
<dbReference type="Proteomes" id="UP000001170">
    <property type="component" value="Chromosome"/>
</dbReference>
<dbReference type="GO" id="GO:0005737">
    <property type="term" value="C:cytoplasm"/>
    <property type="evidence" value="ECO:0007669"/>
    <property type="project" value="UniProtKB-SubCell"/>
</dbReference>
<dbReference type="GO" id="GO:0005524">
    <property type="term" value="F:ATP binding"/>
    <property type="evidence" value="ECO:0007669"/>
    <property type="project" value="UniProtKB-KW"/>
</dbReference>
<dbReference type="GO" id="GO:0016879">
    <property type="term" value="F:ligase activity, forming carbon-nitrogen bonds"/>
    <property type="evidence" value="ECO:0007669"/>
    <property type="project" value="UniProtKB-UniRule"/>
</dbReference>
<dbReference type="GO" id="GO:0000049">
    <property type="term" value="F:tRNA binding"/>
    <property type="evidence" value="ECO:0007669"/>
    <property type="project" value="UniProtKB-KW"/>
</dbReference>
<dbReference type="GO" id="GO:0006400">
    <property type="term" value="P:tRNA modification"/>
    <property type="evidence" value="ECO:0007669"/>
    <property type="project" value="UniProtKB-UniRule"/>
</dbReference>
<dbReference type="Gene3D" id="3.40.50.620">
    <property type="entry name" value="HUPs"/>
    <property type="match status" value="1"/>
</dbReference>
<dbReference type="HAMAP" id="MF_01539">
    <property type="entry name" value="TmcAL"/>
    <property type="match status" value="1"/>
</dbReference>
<dbReference type="InterPro" id="IPR014729">
    <property type="entry name" value="Rossmann-like_a/b/a_fold"/>
</dbReference>
<dbReference type="InterPro" id="IPR008513">
    <property type="entry name" value="tRNA(Met)_cyd_acetate_ligase"/>
</dbReference>
<dbReference type="NCBIfam" id="NF010191">
    <property type="entry name" value="PRK13670.1"/>
    <property type="match status" value="1"/>
</dbReference>
<dbReference type="PANTHER" id="PTHR37825">
    <property type="entry name" value="TRNA(MET) CYTIDINE ACETATE LIGASE"/>
    <property type="match status" value="1"/>
</dbReference>
<dbReference type="PANTHER" id="PTHR37825:SF1">
    <property type="entry name" value="TRNA(MET) CYTIDINE ACETATE LIGASE"/>
    <property type="match status" value="1"/>
</dbReference>
<dbReference type="Pfam" id="PF05636">
    <property type="entry name" value="HIGH_NTase1"/>
    <property type="match status" value="1"/>
</dbReference>
<dbReference type="SUPFAM" id="SSF52374">
    <property type="entry name" value="Nucleotidylyl transferase"/>
    <property type="match status" value="1"/>
</dbReference>
<organism>
    <name type="scientific">Streptococcus thermophilus (strain ATCC BAA-250 / LMG 18311)</name>
    <dbReference type="NCBI Taxonomy" id="264199"/>
    <lineage>
        <taxon>Bacteria</taxon>
        <taxon>Bacillati</taxon>
        <taxon>Bacillota</taxon>
        <taxon>Bacilli</taxon>
        <taxon>Lactobacillales</taxon>
        <taxon>Streptococcaceae</taxon>
        <taxon>Streptococcus</taxon>
    </lineage>
</organism>
<keyword id="KW-0067">ATP-binding</keyword>
<keyword id="KW-0963">Cytoplasm</keyword>
<keyword id="KW-0436">Ligase</keyword>
<keyword id="KW-0547">Nucleotide-binding</keyword>
<keyword id="KW-1185">Reference proteome</keyword>
<keyword id="KW-0694">RNA-binding</keyword>
<keyword id="KW-0819">tRNA processing</keyword>
<keyword id="KW-0820">tRNA-binding</keyword>
<accession>Q5M323</accession>
<gene>
    <name evidence="1" type="primary">tmcAL</name>
    <name type="ordered locus">stu1615</name>
</gene>